<evidence type="ECO:0000255" key="1">
    <source>
        <dbReference type="HAMAP-Rule" id="MF_00152"/>
    </source>
</evidence>
<sequence length="286" mass="31702">MYEKLIGAHVSASGGVELAPVRAHEIGANAFALFTKNQRQWAAKPLEASSIRAFKANCKKWGFGSEAILPHDSYLINLGAPEPEKLDKSRAAFVDEMLRCDQLGLTLLNFHPGSHLQQVSEEACLATIAESINLAHRQVPNVIAVIENTAGQGSNLGWRFEHLAAIIDQVEDKERVGVCLDTCHTFAAGYDLRTKAACDETFAEFERVVGMHYLRAMHINDSKGKLASRVDRHHSLGMGEIGWECFEYIAQDARFNGIPLILETIDPDIWATEIATLRKFSTQKEN</sequence>
<reference key="1">
    <citation type="journal article" date="2000" name="Nature">
        <title>DNA sequence of both chromosomes of the cholera pathogen Vibrio cholerae.</title>
        <authorList>
            <person name="Heidelberg J.F."/>
            <person name="Eisen J.A."/>
            <person name="Nelson W.C."/>
            <person name="Clayton R.A."/>
            <person name="Gwinn M.L."/>
            <person name="Dodson R.J."/>
            <person name="Haft D.H."/>
            <person name="Hickey E.K."/>
            <person name="Peterson J.D."/>
            <person name="Umayam L.A."/>
            <person name="Gill S.R."/>
            <person name="Nelson K.E."/>
            <person name="Read T.D."/>
            <person name="Tettelin H."/>
            <person name="Richardson D.L."/>
            <person name="Ermolaeva M.D."/>
            <person name="Vamathevan J.J."/>
            <person name="Bass S."/>
            <person name="Qin H."/>
            <person name="Dragoi I."/>
            <person name="Sellers P."/>
            <person name="McDonald L.A."/>
            <person name="Utterback T.R."/>
            <person name="Fleischmann R.D."/>
            <person name="Nierman W.C."/>
            <person name="White O."/>
            <person name="Salzberg S.L."/>
            <person name="Smith H.O."/>
            <person name="Colwell R.R."/>
            <person name="Mekalanos J.J."/>
            <person name="Venter J.C."/>
            <person name="Fraser C.M."/>
        </authorList>
    </citation>
    <scope>NUCLEOTIDE SEQUENCE [LARGE SCALE GENOMIC DNA]</scope>
    <source>
        <strain>ATCC 39315 / El Tor Inaba N16961</strain>
    </source>
</reference>
<protein>
    <recommendedName>
        <fullName evidence="1">Probable endonuclease 4</fullName>
        <ecNumber evidence="1">3.1.21.2</ecNumber>
    </recommendedName>
    <alternativeName>
        <fullName evidence="1">Endodeoxyribonuclease IV</fullName>
    </alternativeName>
    <alternativeName>
        <fullName evidence="1">Endonuclease IV</fullName>
    </alternativeName>
</protein>
<proteinExistence type="inferred from homology"/>
<feature type="chain" id="PRO_0000190884" description="Probable endonuclease 4">
    <location>
        <begin position="1"/>
        <end position="286"/>
    </location>
</feature>
<feature type="binding site" evidence="1">
    <location>
        <position position="71"/>
    </location>
    <ligand>
        <name>Zn(2+)</name>
        <dbReference type="ChEBI" id="CHEBI:29105"/>
        <label>1</label>
    </ligand>
</feature>
<feature type="binding site" evidence="1">
    <location>
        <position position="111"/>
    </location>
    <ligand>
        <name>Zn(2+)</name>
        <dbReference type="ChEBI" id="CHEBI:29105"/>
        <label>1</label>
    </ligand>
</feature>
<feature type="binding site" evidence="1">
    <location>
        <position position="147"/>
    </location>
    <ligand>
        <name>Zn(2+)</name>
        <dbReference type="ChEBI" id="CHEBI:29105"/>
        <label>1</label>
    </ligand>
</feature>
<feature type="binding site" evidence="1">
    <location>
        <position position="147"/>
    </location>
    <ligand>
        <name>Zn(2+)</name>
        <dbReference type="ChEBI" id="CHEBI:29105"/>
        <label>2</label>
    </ligand>
</feature>
<feature type="binding site" evidence="1">
    <location>
        <position position="181"/>
    </location>
    <ligand>
        <name>Zn(2+)</name>
        <dbReference type="ChEBI" id="CHEBI:29105"/>
        <label>2</label>
    </ligand>
</feature>
<feature type="binding site" evidence="1">
    <location>
        <position position="184"/>
    </location>
    <ligand>
        <name>Zn(2+)</name>
        <dbReference type="ChEBI" id="CHEBI:29105"/>
        <label>3</label>
    </ligand>
</feature>
<feature type="binding site" evidence="1">
    <location>
        <position position="218"/>
    </location>
    <ligand>
        <name>Zn(2+)</name>
        <dbReference type="ChEBI" id="CHEBI:29105"/>
        <label>2</label>
    </ligand>
</feature>
<feature type="binding site" evidence="1">
    <location>
        <position position="231"/>
    </location>
    <ligand>
        <name>Zn(2+)</name>
        <dbReference type="ChEBI" id="CHEBI:29105"/>
        <label>3</label>
    </ligand>
</feature>
<feature type="binding site" evidence="1">
    <location>
        <position position="233"/>
    </location>
    <ligand>
        <name>Zn(2+)</name>
        <dbReference type="ChEBI" id="CHEBI:29105"/>
        <label>3</label>
    </ligand>
</feature>
<feature type="binding site" evidence="1">
    <location>
        <position position="263"/>
    </location>
    <ligand>
        <name>Zn(2+)</name>
        <dbReference type="ChEBI" id="CHEBI:29105"/>
        <label>2</label>
    </ligand>
</feature>
<gene>
    <name evidence="1" type="primary">nfo</name>
    <name type="ordered locus">VC_2360</name>
</gene>
<accession>Q9KPK7</accession>
<name>END4_VIBCH</name>
<dbReference type="EC" id="3.1.21.2" evidence="1"/>
<dbReference type="EMBL" id="AE003852">
    <property type="protein sequence ID" value="AAF95503.1"/>
    <property type="molecule type" value="Genomic_DNA"/>
</dbReference>
<dbReference type="PIR" id="D82086">
    <property type="entry name" value="D82086"/>
</dbReference>
<dbReference type="RefSeq" id="NP_231990.1">
    <property type="nucleotide sequence ID" value="NC_002505.1"/>
</dbReference>
<dbReference type="RefSeq" id="WP_000273042.1">
    <property type="nucleotide sequence ID" value="NZ_LT906614.1"/>
</dbReference>
<dbReference type="SMR" id="Q9KPK7"/>
<dbReference type="STRING" id="243277.VC_2360"/>
<dbReference type="DNASU" id="2613029"/>
<dbReference type="EnsemblBacteria" id="AAF95503">
    <property type="protein sequence ID" value="AAF95503"/>
    <property type="gene ID" value="VC_2360"/>
</dbReference>
<dbReference type="GeneID" id="69719029"/>
<dbReference type="KEGG" id="vch:VC_2360"/>
<dbReference type="PATRIC" id="fig|243277.26.peg.2247"/>
<dbReference type="eggNOG" id="COG0648">
    <property type="taxonomic scope" value="Bacteria"/>
</dbReference>
<dbReference type="HOGENOM" id="CLU_025885_0_4_6"/>
<dbReference type="Proteomes" id="UP000000584">
    <property type="component" value="Chromosome 1"/>
</dbReference>
<dbReference type="GO" id="GO:0008833">
    <property type="term" value="F:deoxyribonuclease IV (phage-T4-induced) activity"/>
    <property type="evidence" value="ECO:0007669"/>
    <property type="project" value="UniProtKB-UniRule"/>
</dbReference>
<dbReference type="GO" id="GO:0003677">
    <property type="term" value="F:DNA binding"/>
    <property type="evidence" value="ECO:0007669"/>
    <property type="project" value="InterPro"/>
</dbReference>
<dbReference type="GO" id="GO:0003906">
    <property type="term" value="F:DNA-(apurinic or apyrimidinic site) endonuclease activity"/>
    <property type="evidence" value="ECO:0000318"/>
    <property type="project" value="GO_Central"/>
</dbReference>
<dbReference type="GO" id="GO:0008081">
    <property type="term" value="F:phosphoric diester hydrolase activity"/>
    <property type="evidence" value="ECO:0000318"/>
    <property type="project" value="GO_Central"/>
</dbReference>
<dbReference type="GO" id="GO:0008270">
    <property type="term" value="F:zinc ion binding"/>
    <property type="evidence" value="ECO:0007669"/>
    <property type="project" value="UniProtKB-UniRule"/>
</dbReference>
<dbReference type="GO" id="GO:0006284">
    <property type="term" value="P:base-excision repair"/>
    <property type="evidence" value="ECO:0000318"/>
    <property type="project" value="GO_Central"/>
</dbReference>
<dbReference type="CDD" id="cd00019">
    <property type="entry name" value="AP2Ec"/>
    <property type="match status" value="1"/>
</dbReference>
<dbReference type="FunFam" id="3.20.20.150:FF:000001">
    <property type="entry name" value="Probable endonuclease 4"/>
    <property type="match status" value="1"/>
</dbReference>
<dbReference type="Gene3D" id="3.20.20.150">
    <property type="entry name" value="Divalent-metal-dependent TIM barrel enzymes"/>
    <property type="match status" value="1"/>
</dbReference>
<dbReference type="HAMAP" id="MF_00152">
    <property type="entry name" value="Nfo"/>
    <property type="match status" value="1"/>
</dbReference>
<dbReference type="InterPro" id="IPR001719">
    <property type="entry name" value="AP_endonuc_2"/>
</dbReference>
<dbReference type="InterPro" id="IPR018246">
    <property type="entry name" value="AP_endonuc_F2_Zn_BS"/>
</dbReference>
<dbReference type="InterPro" id="IPR036237">
    <property type="entry name" value="Xyl_isomerase-like_sf"/>
</dbReference>
<dbReference type="InterPro" id="IPR013022">
    <property type="entry name" value="Xyl_isomerase-like_TIM-brl"/>
</dbReference>
<dbReference type="NCBIfam" id="TIGR00587">
    <property type="entry name" value="nfo"/>
    <property type="match status" value="1"/>
</dbReference>
<dbReference type="NCBIfam" id="NF002199">
    <property type="entry name" value="PRK01060.1-4"/>
    <property type="match status" value="1"/>
</dbReference>
<dbReference type="PANTHER" id="PTHR21445:SF0">
    <property type="entry name" value="APURINIC-APYRIMIDINIC ENDONUCLEASE"/>
    <property type="match status" value="1"/>
</dbReference>
<dbReference type="PANTHER" id="PTHR21445">
    <property type="entry name" value="ENDONUCLEASE IV ENDODEOXYRIBONUCLEASE IV"/>
    <property type="match status" value="1"/>
</dbReference>
<dbReference type="Pfam" id="PF01261">
    <property type="entry name" value="AP_endonuc_2"/>
    <property type="match status" value="1"/>
</dbReference>
<dbReference type="SMART" id="SM00518">
    <property type="entry name" value="AP2Ec"/>
    <property type="match status" value="1"/>
</dbReference>
<dbReference type="SUPFAM" id="SSF51658">
    <property type="entry name" value="Xylose isomerase-like"/>
    <property type="match status" value="1"/>
</dbReference>
<dbReference type="PROSITE" id="PS00729">
    <property type="entry name" value="AP_NUCLEASE_F2_1"/>
    <property type="match status" value="1"/>
</dbReference>
<dbReference type="PROSITE" id="PS00730">
    <property type="entry name" value="AP_NUCLEASE_F2_2"/>
    <property type="match status" value="1"/>
</dbReference>
<dbReference type="PROSITE" id="PS00731">
    <property type="entry name" value="AP_NUCLEASE_F2_3"/>
    <property type="match status" value="1"/>
</dbReference>
<dbReference type="PROSITE" id="PS51432">
    <property type="entry name" value="AP_NUCLEASE_F2_4"/>
    <property type="match status" value="1"/>
</dbReference>
<organism>
    <name type="scientific">Vibrio cholerae serotype O1 (strain ATCC 39315 / El Tor Inaba N16961)</name>
    <dbReference type="NCBI Taxonomy" id="243277"/>
    <lineage>
        <taxon>Bacteria</taxon>
        <taxon>Pseudomonadati</taxon>
        <taxon>Pseudomonadota</taxon>
        <taxon>Gammaproteobacteria</taxon>
        <taxon>Vibrionales</taxon>
        <taxon>Vibrionaceae</taxon>
        <taxon>Vibrio</taxon>
    </lineage>
</organism>
<comment type="function">
    <text evidence="1">Endonuclease IV plays a role in DNA repair. It cleaves phosphodiester bonds at apurinic or apyrimidinic (AP) sites, generating a 3'-hydroxyl group and a 5'-terminal sugar phosphate.</text>
</comment>
<comment type="catalytic activity">
    <reaction evidence="1">
        <text>Endonucleolytic cleavage to 5'-phosphooligonucleotide end-products.</text>
        <dbReference type="EC" id="3.1.21.2"/>
    </reaction>
</comment>
<comment type="cofactor">
    <cofactor evidence="1">
        <name>Zn(2+)</name>
        <dbReference type="ChEBI" id="CHEBI:29105"/>
    </cofactor>
    <text evidence="1">Binds 3 Zn(2+) ions.</text>
</comment>
<comment type="similarity">
    <text evidence="1">Belongs to the AP endonuclease 2 family.</text>
</comment>
<keyword id="KW-0227">DNA damage</keyword>
<keyword id="KW-0234">DNA repair</keyword>
<keyword id="KW-0255">Endonuclease</keyword>
<keyword id="KW-0378">Hydrolase</keyword>
<keyword id="KW-0479">Metal-binding</keyword>
<keyword id="KW-0540">Nuclease</keyword>
<keyword id="KW-1185">Reference proteome</keyword>
<keyword id="KW-0862">Zinc</keyword>